<sequence length="156" mass="16995">MRSSAKQEELVKAFKALLKEEKFSSQGEIVAALQEQGFDNINQSKVSRMLTKFGAVRTRNAKMEMVYCLPAELGVPTTSSPLKNLVLDIDYNDAVVVIHTSPGAAQLIARLLDSLGKAEGILGTIAGDDTIFTTPANGFTVKDLYEAILELFDQEL</sequence>
<proteinExistence type="inferred from homology"/>
<accession>B1LGK3</accession>
<keyword id="KW-0028">Amino-acid biosynthesis</keyword>
<keyword id="KW-0055">Arginine biosynthesis</keyword>
<keyword id="KW-0963">Cytoplasm</keyword>
<keyword id="KW-0238">DNA-binding</keyword>
<keyword id="KW-0678">Repressor</keyword>
<keyword id="KW-0804">Transcription</keyword>
<keyword id="KW-0805">Transcription regulation</keyword>
<reference key="1">
    <citation type="journal article" date="2008" name="J. Bacteriol.">
        <title>Insights into the environmental resistance gene pool from the genome sequence of the multidrug-resistant environmental isolate Escherichia coli SMS-3-5.</title>
        <authorList>
            <person name="Fricke W.F."/>
            <person name="Wright M.S."/>
            <person name="Lindell A.H."/>
            <person name="Harkins D.M."/>
            <person name="Baker-Austin C."/>
            <person name="Ravel J."/>
            <person name="Stepanauskas R."/>
        </authorList>
    </citation>
    <scope>NUCLEOTIDE SEQUENCE [LARGE SCALE GENOMIC DNA]</scope>
    <source>
        <strain>SMS-3-5 / SECEC</strain>
    </source>
</reference>
<organism>
    <name type="scientific">Escherichia coli (strain SMS-3-5 / SECEC)</name>
    <dbReference type="NCBI Taxonomy" id="439855"/>
    <lineage>
        <taxon>Bacteria</taxon>
        <taxon>Pseudomonadati</taxon>
        <taxon>Pseudomonadota</taxon>
        <taxon>Gammaproteobacteria</taxon>
        <taxon>Enterobacterales</taxon>
        <taxon>Enterobacteriaceae</taxon>
        <taxon>Escherichia</taxon>
    </lineage>
</organism>
<feature type="chain" id="PRO_1000189556" description="Arginine repressor">
    <location>
        <begin position="1"/>
        <end position="156"/>
    </location>
</feature>
<gene>
    <name evidence="1" type="primary">argR</name>
    <name type="ordered locus">EcSMS35_3533</name>
</gene>
<comment type="function">
    <text evidence="1">Regulates arginine biosynthesis genes.</text>
</comment>
<comment type="pathway">
    <text>Amino-acid biosynthesis; L-arginine biosynthesis [regulation].</text>
</comment>
<comment type="subcellular location">
    <subcellularLocation>
        <location evidence="1">Cytoplasm</location>
    </subcellularLocation>
</comment>
<comment type="similarity">
    <text evidence="1">Belongs to the ArgR family.</text>
</comment>
<name>ARGR_ECOSM</name>
<dbReference type="EMBL" id="CP000970">
    <property type="protein sequence ID" value="ACB18442.1"/>
    <property type="molecule type" value="Genomic_DNA"/>
</dbReference>
<dbReference type="RefSeq" id="WP_001257846.1">
    <property type="nucleotide sequence ID" value="NC_010498.1"/>
</dbReference>
<dbReference type="SMR" id="B1LGK3"/>
<dbReference type="GeneID" id="93778748"/>
<dbReference type="KEGG" id="ecm:EcSMS35_3533"/>
<dbReference type="HOGENOM" id="CLU_097103_2_0_6"/>
<dbReference type="UniPathway" id="UPA00068"/>
<dbReference type="Proteomes" id="UP000007011">
    <property type="component" value="Chromosome"/>
</dbReference>
<dbReference type="GO" id="GO:0005737">
    <property type="term" value="C:cytoplasm"/>
    <property type="evidence" value="ECO:0007669"/>
    <property type="project" value="UniProtKB-SubCell"/>
</dbReference>
<dbReference type="GO" id="GO:0034618">
    <property type="term" value="F:arginine binding"/>
    <property type="evidence" value="ECO:0007669"/>
    <property type="project" value="InterPro"/>
</dbReference>
<dbReference type="GO" id="GO:0003677">
    <property type="term" value="F:DNA binding"/>
    <property type="evidence" value="ECO:0007669"/>
    <property type="project" value="UniProtKB-KW"/>
</dbReference>
<dbReference type="GO" id="GO:0003700">
    <property type="term" value="F:DNA-binding transcription factor activity"/>
    <property type="evidence" value="ECO:0007669"/>
    <property type="project" value="UniProtKB-UniRule"/>
</dbReference>
<dbReference type="GO" id="GO:0006526">
    <property type="term" value="P:L-arginine biosynthetic process"/>
    <property type="evidence" value="ECO:0007669"/>
    <property type="project" value="UniProtKB-UniPathway"/>
</dbReference>
<dbReference type="GO" id="GO:0051259">
    <property type="term" value="P:protein complex oligomerization"/>
    <property type="evidence" value="ECO:0007669"/>
    <property type="project" value="InterPro"/>
</dbReference>
<dbReference type="GO" id="GO:1900079">
    <property type="term" value="P:regulation of arginine biosynthetic process"/>
    <property type="evidence" value="ECO:0007669"/>
    <property type="project" value="UniProtKB-UniRule"/>
</dbReference>
<dbReference type="FunFam" id="1.10.10.10:FF:000074">
    <property type="entry name" value="Arginine repressor"/>
    <property type="match status" value="1"/>
</dbReference>
<dbReference type="FunFam" id="3.30.1360.40:FF:000004">
    <property type="entry name" value="Arginine repressor"/>
    <property type="match status" value="1"/>
</dbReference>
<dbReference type="Gene3D" id="3.30.1360.40">
    <property type="match status" value="1"/>
</dbReference>
<dbReference type="Gene3D" id="1.10.10.10">
    <property type="entry name" value="Winged helix-like DNA-binding domain superfamily/Winged helix DNA-binding domain"/>
    <property type="match status" value="1"/>
</dbReference>
<dbReference type="HAMAP" id="MF_00173">
    <property type="entry name" value="Arg_repressor"/>
    <property type="match status" value="1"/>
</dbReference>
<dbReference type="InterPro" id="IPR001669">
    <property type="entry name" value="Arg_repress"/>
</dbReference>
<dbReference type="InterPro" id="IPR020899">
    <property type="entry name" value="Arg_repress_C"/>
</dbReference>
<dbReference type="InterPro" id="IPR036251">
    <property type="entry name" value="Arg_repress_C_sf"/>
</dbReference>
<dbReference type="InterPro" id="IPR020900">
    <property type="entry name" value="Arg_repress_DNA-bd"/>
</dbReference>
<dbReference type="InterPro" id="IPR036388">
    <property type="entry name" value="WH-like_DNA-bd_sf"/>
</dbReference>
<dbReference type="InterPro" id="IPR036390">
    <property type="entry name" value="WH_DNA-bd_sf"/>
</dbReference>
<dbReference type="NCBIfam" id="TIGR01529">
    <property type="entry name" value="argR_whole"/>
    <property type="match status" value="1"/>
</dbReference>
<dbReference type="NCBIfam" id="NF003457">
    <property type="entry name" value="PRK05066.1"/>
    <property type="match status" value="1"/>
</dbReference>
<dbReference type="PANTHER" id="PTHR34471">
    <property type="entry name" value="ARGININE REPRESSOR"/>
    <property type="match status" value="1"/>
</dbReference>
<dbReference type="PANTHER" id="PTHR34471:SF1">
    <property type="entry name" value="ARGININE REPRESSOR"/>
    <property type="match status" value="1"/>
</dbReference>
<dbReference type="Pfam" id="PF01316">
    <property type="entry name" value="Arg_repressor"/>
    <property type="match status" value="1"/>
</dbReference>
<dbReference type="Pfam" id="PF02863">
    <property type="entry name" value="Arg_repressor_C"/>
    <property type="match status" value="1"/>
</dbReference>
<dbReference type="PRINTS" id="PR01467">
    <property type="entry name" value="ARGREPRESSOR"/>
</dbReference>
<dbReference type="SUPFAM" id="SSF55252">
    <property type="entry name" value="C-terminal domain of arginine repressor"/>
    <property type="match status" value="1"/>
</dbReference>
<dbReference type="SUPFAM" id="SSF46785">
    <property type="entry name" value="Winged helix' DNA-binding domain"/>
    <property type="match status" value="1"/>
</dbReference>
<protein>
    <recommendedName>
        <fullName evidence="1">Arginine repressor</fullName>
    </recommendedName>
</protein>
<evidence type="ECO:0000255" key="1">
    <source>
        <dbReference type="HAMAP-Rule" id="MF_00173"/>
    </source>
</evidence>